<reference evidence="13" key="1">
    <citation type="journal article" date="2005" name="Nature">
        <title>Genome sequence, comparative analysis and haplotype structure of the domestic dog.</title>
        <authorList>
            <person name="Lindblad-Toh K."/>
            <person name="Wade C.M."/>
            <person name="Mikkelsen T.S."/>
            <person name="Karlsson E.K."/>
            <person name="Jaffe D.B."/>
            <person name="Kamal M."/>
            <person name="Clamp M."/>
            <person name="Chang J.L."/>
            <person name="Kulbokas E.J. III"/>
            <person name="Zody M.C."/>
            <person name="Mauceli E."/>
            <person name="Xie X."/>
            <person name="Breen M."/>
            <person name="Wayne R.K."/>
            <person name="Ostrander E.A."/>
            <person name="Ponting C.P."/>
            <person name="Galibert F."/>
            <person name="Smith D.R."/>
            <person name="deJong P.J."/>
            <person name="Kirkness E.F."/>
            <person name="Alvarez P."/>
            <person name="Biagi T."/>
            <person name="Brockman W."/>
            <person name="Butler J."/>
            <person name="Chin C.-W."/>
            <person name="Cook A."/>
            <person name="Cuff J."/>
            <person name="Daly M.J."/>
            <person name="DeCaprio D."/>
            <person name="Gnerre S."/>
            <person name="Grabherr M."/>
            <person name="Kellis M."/>
            <person name="Kleber M."/>
            <person name="Bardeleben C."/>
            <person name="Goodstadt L."/>
            <person name="Heger A."/>
            <person name="Hitte C."/>
            <person name="Kim L."/>
            <person name="Koepfli K.-P."/>
            <person name="Parker H.G."/>
            <person name="Pollinger J.P."/>
            <person name="Searle S.M.J."/>
            <person name="Sutter N.B."/>
            <person name="Thomas R."/>
            <person name="Webber C."/>
            <person name="Baldwin J."/>
            <person name="Abebe A."/>
            <person name="Abouelleil A."/>
            <person name="Aftuck L."/>
            <person name="Ait-Zahra M."/>
            <person name="Aldredge T."/>
            <person name="Allen N."/>
            <person name="An P."/>
            <person name="Anderson S."/>
            <person name="Antoine C."/>
            <person name="Arachchi H."/>
            <person name="Aslam A."/>
            <person name="Ayotte L."/>
            <person name="Bachantsang P."/>
            <person name="Barry A."/>
            <person name="Bayul T."/>
            <person name="Benamara M."/>
            <person name="Berlin A."/>
            <person name="Bessette D."/>
            <person name="Blitshteyn B."/>
            <person name="Bloom T."/>
            <person name="Blye J."/>
            <person name="Boguslavskiy L."/>
            <person name="Bonnet C."/>
            <person name="Boukhgalter B."/>
            <person name="Brown A."/>
            <person name="Cahill P."/>
            <person name="Calixte N."/>
            <person name="Camarata J."/>
            <person name="Cheshatsang Y."/>
            <person name="Chu J."/>
            <person name="Citroen M."/>
            <person name="Collymore A."/>
            <person name="Cooke P."/>
            <person name="Dawoe T."/>
            <person name="Daza R."/>
            <person name="Decktor K."/>
            <person name="DeGray S."/>
            <person name="Dhargay N."/>
            <person name="Dooley K."/>
            <person name="Dooley K."/>
            <person name="Dorje P."/>
            <person name="Dorjee K."/>
            <person name="Dorris L."/>
            <person name="Duffey N."/>
            <person name="Dupes A."/>
            <person name="Egbiremolen O."/>
            <person name="Elong R."/>
            <person name="Falk J."/>
            <person name="Farina A."/>
            <person name="Faro S."/>
            <person name="Ferguson D."/>
            <person name="Ferreira P."/>
            <person name="Fisher S."/>
            <person name="FitzGerald M."/>
            <person name="Foley K."/>
            <person name="Foley C."/>
            <person name="Franke A."/>
            <person name="Friedrich D."/>
            <person name="Gage D."/>
            <person name="Garber M."/>
            <person name="Gearin G."/>
            <person name="Giannoukos G."/>
            <person name="Goode T."/>
            <person name="Goyette A."/>
            <person name="Graham J."/>
            <person name="Grandbois E."/>
            <person name="Gyaltsen K."/>
            <person name="Hafez N."/>
            <person name="Hagopian D."/>
            <person name="Hagos B."/>
            <person name="Hall J."/>
            <person name="Healy C."/>
            <person name="Hegarty R."/>
            <person name="Honan T."/>
            <person name="Horn A."/>
            <person name="Houde N."/>
            <person name="Hughes L."/>
            <person name="Hunnicutt L."/>
            <person name="Husby M."/>
            <person name="Jester B."/>
            <person name="Jones C."/>
            <person name="Kamat A."/>
            <person name="Kanga B."/>
            <person name="Kells C."/>
            <person name="Khazanovich D."/>
            <person name="Kieu A.C."/>
            <person name="Kisner P."/>
            <person name="Kumar M."/>
            <person name="Lance K."/>
            <person name="Landers T."/>
            <person name="Lara M."/>
            <person name="Lee W."/>
            <person name="Leger J.-P."/>
            <person name="Lennon N."/>
            <person name="Leuper L."/>
            <person name="LeVine S."/>
            <person name="Liu J."/>
            <person name="Liu X."/>
            <person name="Lokyitsang Y."/>
            <person name="Lokyitsang T."/>
            <person name="Lui A."/>
            <person name="Macdonald J."/>
            <person name="Major J."/>
            <person name="Marabella R."/>
            <person name="Maru K."/>
            <person name="Matthews C."/>
            <person name="McDonough S."/>
            <person name="Mehta T."/>
            <person name="Meldrim J."/>
            <person name="Melnikov A."/>
            <person name="Meneus L."/>
            <person name="Mihalev A."/>
            <person name="Mihova T."/>
            <person name="Miller K."/>
            <person name="Mittelman R."/>
            <person name="Mlenga V."/>
            <person name="Mulrain L."/>
            <person name="Munson G."/>
            <person name="Navidi A."/>
            <person name="Naylor J."/>
            <person name="Nguyen T."/>
            <person name="Nguyen N."/>
            <person name="Nguyen C."/>
            <person name="Nguyen T."/>
            <person name="Nicol R."/>
            <person name="Norbu N."/>
            <person name="Norbu C."/>
            <person name="Novod N."/>
            <person name="Nyima T."/>
            <person name="Olandt P."/>
            <person name="O'Neill B."/>
            <person name="O'Neill K."/>
            <person name="Osman S."/>
            <person name="Oyono L."/>
            <person name="Patti C."/>
            <person name="Perrin D."/>
            <person name="Phunkhang P."/>
            <person name="Pierre F."/>
            <person name="Priest M."/>
            <person name="Rachupka A."/>
            <person name="Raghuraman S."/>
            <person name="Rameau R."/>
            <person name="Ray V."/>
            <person name="Raymond C."/>
            <person name="Rege F."/>
            <person name="Rise C."/>
            <person name="Rogers J."/>
            <person name="Rogov P."/>
            <person name="Sahalie J."/>
            <person name="Settipalli S."/>
            <person name="Sharpe T."/>
            <person name="Shea T."/>
            <person name="Sheehan M."/>
            <person name="Sherpa N."/>
            <person name="Shi J."/>
            <person name="Shih D."/>
            <person name="Sloan J."/>
            <person name="Smith C."/>
            <person name="Sparrow T."/>
            <person name="Stalker J."/>
            <person name="Stange-Thomann N."/>
            <person name="Stavropoulos S."/>
            <person name="Stone C."/>
            <person name="Stone S."/>
            <person name="Sykes S."/>
            <person name="Tchuinga P."/>
            <person name="Tenzing P."/>
            <person name="Tesfaye S."/>
            <person name="Thoulutsang D."/>
            <person name="Thoulutsang Y."/>
            <person name="Topham K."/>
            <person name="Topping I."/>
            <person name="Tsamla T."/>
            <person name="Vassiliev H."/>
            <person name="Venkataraman V."/>
            <person name="Vo A."/>
            <person name="Wangchuk T."/>
            <person name="Wangdi T."/>
            <person name="Weiand M."/>
            <person name="Wilkinson J."/>
            <person name="Wilson A."/>
            <person name="Yadav S."/>
            <person name="Yang S."/>
            <person name="Yang X."/>
            <person name="Young G."/>
            <person name="Yu Q."/>
            <person name="Zainoun J."/>
            <person name="Zembek L."/>
            <person name="Zimmer A."/>
            <person name="Lander E.S."/>
        </authorList>
    </citation>
    <scope>NUCLEOTIDE SEQUENCE [LARGE SCALE GENOMIC DNA]</scope>
    <source>
        <strain evidence="13">Boxer</strain>
    </source>
</reference>
<reference key="2">
    <citation type="journal article" date="2003" name="Gene">
        <title>Mammalian Crumbs3 is a small transmembrane protein linked to protein associated with Lin-7 (Pals1).</title>
        <authorList>
            <person name="Makarova O."/>
            <person name="Roh M.H."/>
            <person name="Liu C.-J."/>
            <person name="Laurinec S."/>
            <person name="Margolis B."/>
        </authorList>
    </citation>
    <scope>IDENTIFICATION IN A COMPLEX WITH PATJ AND CRB3</scope>
    <scope>INTERACTION WITH CRB3</scope>
</reference>
<reference evidence="12" key="3">
    <citation type="journal article" date="2007" name="Mol. Biol. Cell">
        <title>PALS1 regulates E-cadherin trafficking in mammalian epithelial cells.</title>
        <authorList>
            <person name="Wang Q."/>
            <person name="Chen X.W."/>
            <person name="Margolis B."/>
        </authorList>
    </citation>
    <scope>FUNCTION</scope>
    <scope>SUBCELLULAR LOCATION</scope>
</reference>
<evidence type="ECO:0000250" key="1">
    <source>
        <dbReference type="UniProtKB" id="B4F7E7"/>
    </source>
</evidence>
<evidence type="ECO:0000250" key="2">
    <source>
        <dbReference type="UniProtKB" id="Q8N3R9"/>
    </source>
</evidence>
<evidence type="ECO:0000250" key="3">
    <source>
        <dbReference type="UniProtKB" id="Q9JLB2"/>
    </source>
</evidence>
<evidence type="ECO:0000255" key="4">
    <source>
        <dbReference type="PROSITE-ProRule" id="PRU00100"/>
    </source>
</evidence>
<evidence type="ECO:0000255" key="5">
    <source>
        <dbReference type="PROSITE-ProRule" id="PRU00143"/>
    </source>
</evidence>
<evidence type="ECO:0000255" key="6">
    <source>
        <dbReference type="PROSITE-ProRule" id="PRU00192"/>
    </source>
</evidence>
<evidence type="ECO:0000255" key="7">
    <source>
        <dbReference type="PROSITE-ProRule" id="PRU00365"/>
    </source>
</evidence>
<evidence type="ECO:0000256" key="8">
    <source>
        <dbReference type="SAM" id="MobiDB-lite"/>
    </source>
</evidence>
<evidence type="ECO:0000269" key="9">
    <source>
    </source>
</evidence>
<evidence type="ECO:0000269" key="10">
    <source>
    </source>
</evidence>
<evidence type="ECO:0000303" key="11">
    <source>
    </source>
</evidence>
<evidence type="ECO:0000305" key="12"/>
<evidence type="ECO:0000312" key="13">
    <source>
        <dbReference type="Proteomes" id="UP000002254"/>
    </source>
</evidence>
<gene>
    <name evidence="11" type="primary">PALS1</name>
    <name type="synonym">MPP5</name>
</gene>
<name>PALS1_CANLF</name>
<protein>
    <recommendedName>
        <fullName evidence="12">Protein PALS1</fullName>
    </recommendedName>
    <alternativeName>
        <fullName evidence="12">MAGUK p55 subfamily member 5</fullName>
    </alternativeName>
    <alternativeName>
        <fullName>Protein associated with Lin-7 1</fullName>
    </alternativeName>
</protein>
<dbReference type="EMBL" id="AAEX03005795">
    <property type="status" value="NOT_ANNOTATED_CDS"/>
    <property type="molecule type" value="Genomic_DNA"/>
</dbReference>
<dbReference type="RefSeq" id="XP_005623574.1">
    <property type="nucleotide sequence ID" value="XM_005623517.2"/>
</dbReference>
<dbReference type="RefSeq" id="XP_005623575.1">
    <property type="nucleotide sequence ID" value="XM_005623518.2"/>
</dbReference>
<dbReference type="RefSeq" id="XP_005623576.1">
    <property type="nucleotide sequence ID" value="XM_005623519.2"/>
</dbReference>
<dbReference type="RefSeq" id="XP_005623577.1">
    <property type="nucleotide sequence ID" value="XM_005623520.2"/>
</dbReference>
<dbReference type="RefSeq" id="XP_547862.2">
    <property type="nucleotide sequence ID" value="XM_547862.5"/>
</dbReference>
<dbReference type="SMR" id="E2QY99"/>
<dbReference type="CORUM" id="E2QY99"/>
<dbReference type="FunCoup" id="E2QY99">
    <property type="interactions" value="458"/>
</dbReference>
<dbReference type="STRING" id="9615.ENSCAFP00000024081"/>
<dbReference type="PaxDb" id="9612-ENSCAFP00000024081"/>
<dbReference type="Ensembl" id="ENSCAFT00030031469.1">
    <property type="protein sequence ID" value="ENSCAFP00030027451.1"/>
    <property type="gene ID" value="ENSCAFG00030017049.1"/>
</dbReference>
<dbReference type="Ensembl" id="ENSCAFT00030031577.1">
    <property type="protein sequence ID" value="ENSCAFP00030027534.1"/>
    <property type="gene ID" value="ENSCAFG00030017049.1"/>
</dbReference>
<dbReference type="Ensembl" id="ENSCAFT00040019323.1">
    <property type="protein sequence ID" value="ENSCAFP00040016768.1"/>
    <property type="gene ID" value="ENSCAFG00040010408.1"/>
</dbReference>
<dbReference type="GeneID" id="490740"/>
<dbReference type="KEGG" id="cfa:490740"/>
<dbReference type="CTD" id="64398"/>
<dbReference type="eggNOG" id="KOG0609">
    <property type="taxonomic scope" value="Eukaryota"/>
</dbReference>
<dbReference type="HOGENOM" id="CLU_001715_5_4_1"/>
<dbReference type="InParanoid" id="E2QY99"/>
<dbReference type="OMA" id="FSHRTMT"/>
<dbReference type="OrthoDB" id="43580at2759"/>
<dbReference type="TreeFam" id="TF314263"/>
<dbReference type="Proteomes" id="UP000002254">
    <property type="component" value="Unplaced"/>
</dbReference>
<dbReference type="Proteomes" id="UP000694429">
    <property type="component" value="Chromosome 8"/>
</dbReference>
<dbReference type="Proteomes" id="UP000694542">
    <property type="component" value="Chromosome 8"/>
</dbReference>
<dbReference type="Proteomes" id="UP000805418">
    <property type="component" value="Unplaced"/>
</dbReference>
<dbReference type="Bgee" id="ENSCAFG00000016353">
    <property type="expression patterns" value="Expressed in renal medulla and 46 other cell types or tissues"/>
</dbReference>
<dbReference type="GO" id="GO:0005912">
    <property type="term" value="C:adherens junction"/>
    <property type="evidence" value="ECO:0000250"/>
    <property type="project" value="UniProtKB"/>
</dbReference>
<dbReference type="GO" id="GO:0016324">
    <property type="term" value="C:apical plasma membrane"/>
    <property type="evidence" value="ECO:0007669"/>
    <property type="project" value="UniProtKB-SubCell"/>
</dbReference>
<dbReference type="GO" id="GO:0030424">
    <property type="term" value="C:axon"/>
    <property type="evidence" value="ECO:0007669"/>
    <property type="project" value="UniProtKB-SubCell"/>
</dbReference>
<dbReference type="GO" id="GO:0005923">
    <property type="term" value="C:bicellular tight junction"/>
    <property type="evidence" value="ECO:0007669"/>
    <property type="project" value="UniProtKB-SubCell"/>
</dbReference>
<dbReference type="GO" id="GO:0005794">
    <property type="term" value="C:Golgi apparatus"/>
    <property type="evidence" value="ECO:0007669"/>
    <property type="project" value="UniProtKB-SubCell"/>
</dbReference>
<dbReference type="GO" id="GO:0043204">
    <property type="term" value="C:perikaryon"/>
    <property type="evidence" value="ECO:0007669"/>
    <property type="project" value="UniProtKB-SubCell"/>
</dbReference>
<dbReference type="GO" id="GO:0005886">
    <property type="term" value="C:plasma membrane"/>
    <property type="evidence" value="ECO:0000318"/>
    <property type="project" value="GO_Central"/>
</dbReference>
<dbReference type="GO" id="GO:0005524">
    <property type="term" value="F:ATP binding"/>
    <property type="evidence" value="ECO:0007669"/>
    <property type="project" value="UniProtKB-KW"/>
</dbReference>
<dbReference type="GO" id="GO:0021954">
    <property type="term" value="P:central nervous system neuron development"/>
    <property type="evidence" value="ECO:0000250"/>
    <property type="project" value="UniProtKB"/>
</dbReference>
<dbReference type="GO" id="GO:0021987">
    <property type="term" value="P:cerebral cortex development"/>
    <property type="evidence" value="ECO:0000250"/>
    <property type="project" value="UniProtKB"/>
</dbReference>
<dbReference type="GO" id="GO:0045197">
    <property type="term" value="P:establishment or maintenance of epithelial cell apical/basal polarity"/>
    <property type="evidence" value="ECO:0000318"/>
    <property type="project" value="GO_Central"/>
</dbReference>
<dbReference type="GO" id="GO:0016332">
    <property type="term" value="P:establishment or maintenance of polarity of embryonic epithelium"/>
    <property type="evidence" value="ECO:0000318"/>
    <property type="project" value="GO_Central"/>
</dbReference>
<dbReference type="GO" id="GO:0048699">
    <property type="term" value="P:generation of neurons"/>
    <property type="evidence" value="ECO:0000318"/>
    <property type="project" value="GO_Central"/>
</dbReference>
<dbReference type="GO" id="GO:0002011">
    <property type="term" value="P:morphogenesis of an epithelial sheet"/>
    <property type="evidence" value="ECO:0000318"/>
    <property type="project" value="GO_Central"/>
</dbReference>
<dbReference type="GO" id="GO:0072659">
    <property type="term" value="P:protein localization to plasma membrane"/>
    <property type="evidence" value="ECO:0000318"/>
    <property type="project" value="GO_Central"/>
</dbReference>
<dbReference type="GO" id="GO:0017015">
    <property type="term" value="P:regulation of transforming growth factor beta receptor signaling pathway"/>
    <property type="evidence" value="ECO:0000250"/>
    <property type="project" value="UniProtKB"/>
</dbReference>
<dbReference type="CDD" id="cd00071">
    <property type="entry name" value="GMPK"/>
    <property type="match status" value="1"/>
</dbReference>
<dbReference type="CDD" id="cd06798">
    <property type="entry name" value="PDZ_MPP5-like"/>
    <property type="match status" value="1"/>
</dbReference>
<dbReference type="CDD" id="cd12036">
    <property type="entry name" value="SH3_MPP5"/>
    <property type="match status" value="1"/>
</dbReference>
<dbReference type="FunFam" id="3.30.63.10:FF:000002">
    <property type="entry name" value="Guanylate kinase 1"/>
    <property type="match status" value="1"/>
</dbReference>
<dbReference type="FunFam" id="2.30.30.40:FF:000105">
    <property type="entry name" value="MAGUK p55 subfamily member 5"/>
    <property type="match status" value="1"/>
</dbReference>
<dbReference type="FunFam" id="2.30.42.10:FF:000088">
    <property type="entry name" value="MAGUK p55 subfamily member 5"/>
    <property type="match status" value="1"/>
</dbReference>
<dbReference type="FunFam" id="3.40.50.300:FF:000469">
    <property type="entry name" value="MAGUK p55 subfamily member 5"/>
    <property type="match status" value="1"/>
</dbReference>
<dbReference type="Gene3D" id="2.30.42.10">
    <property type="match status" value="1"/>
</dbReference>
<dbReference type="Gene3D" id="1.10.287.650">
    <property type="entry name" value="L27 domain"/>
    <property type="match status" value="2"/>
</dbReference>
<dbReference type="Gene3D" id="3.40.50.300">
    <property type="entry name" value="P-loop containing nucleotide triphosphate hydrolases"/>
    <property type="match status" value="1"/>
</dbReference>
<dbReference type="Gene3D" id="2.30.30.40">
    <property type="entry name" value="SH3 Domains"/>
    <property type="match status" value="1"/>
</dbReference>
<dbReference type="InterPro" id="IPR008145">
    <property type="entry name" value="GK/Ca_channel_bsu"/>
</dbReference>
<dbReference type="InterPro" id="IPR008144">
    <property type="entry name" value="Guanylate_kin-like_dom"/>
</dbReference>
<dbReference type="InterPro" id="IPR020590">
    <property type="entry name" value="Guanylate_kinase_CS"/>
</dbReference>
<dbReference type="InterPro" id="IPR014775">
    <property type="entry name" value="L27_C"/>
</dbReference>
<dbReference type="InterPro" id="IPR004172">
    <property type="entry name" value="L27_dom"/>
</dbReference>
<dbReference type="InterPro" id="IPR036892">
    <property type="entry name" value="L27_dom_sf"/>
</dbReference>
<dbReference type="InterPro" id="IPR015145">
    <property type="entry name" value="L27_N"/>
</dbReference>
<dbReference type="InterPro" id="IPR050716">
    <property type="entry name" value="MAGUK"/>
</dbReference>
<dbReference type="InterPro" id="IPR035601">
    <property type="entry name" value="MPP5_SH3"/>
</dbReference>
<dbReference type="InterPro" id="IPR027417">
    <property type="entry name" value="P-loop_NTPase"/>
</dbReference>
<dbReference type="InterPro" id="IPR001478">
    <property type="entry name" value="PDZ"/>
</dbReference>
<dbReference type="InterPro" id="IPR036034">
    <property type="entry name" value="PDZ_sf"/>
</dbReference>
<dbReference type="InterPro" id="IPR036028">
    <property type="entry name" value="SH3-like_dom_sf"/>
</dbReference>
<dbReference type="InterPro" id="IPR001452">
    <property type="entry name" value="SH3_domain"/>
</dbReference>
<dbReference type="PANTHER" id="PTHR23122">
    <property type="entry name" value="MEMBRANE-ASSOCIATED GUANYLATE KINASE MAGUK"/>
    <property type="match status" value="1"/>
</dbReference>
<dbReference type="Pfam" id="PF00625">
    <property type="entry name" value="Guanylate_kin"/>
    <property type="match status" value="1"/>
</dbReference>
<dbReference type="Pfam" id="PF02828">
    <property type="entry name" value="L27"/>
    <property type="match status" value="1"/>
</dbReference>
<dbReference type="Pfam" id="PF09060">
    <property type="entry name" value="L27_N"/>
    <property type="match status" value="1"/>
</dbReference>
<dbReference type="Pfam" id="PF00595">
    <property type="entry name" value="PDZ"/>
    <property type="match status" value="1"/>
</dbReference>
<dbReference type="Pfam" id="PF07653">
    <property type="entry name" value="SH3_2"/>
    <property type="match status" value="1"/>
</dbReference>
<dbReference type="SMART" id="SM00072">
    <property type="entry name" value="GuKc"/>
    <property type="match status" value="1"/>
</dbReference>
<dbReference type="SMART" id="SM00569">
    <property type="entry name" value="L27"/>
    <property type="match status" value="2"/>
</dbReference>
<dbReference type="SMART" id="SM00228">
    <property type="entry name" value="PDZ"/>
    <property type="match status" value="1"/>
</dbReference>
<dbReference type="SMART" id="SM00326">
    <property type="entry name" value="SH3"/>
    <property type="match status" value="1"/>
</dbReference>
<dbReference type="SUPFAM" id="SSF101288">
    <property type="entry name" value="L27 domain"/>
    <property type="match status" value="2"/>
</dbReference>
<dbReference type="SUPFAM" id="SSF52540">
    <property type="entry name" value="P-loop containing nucleoside triphosphate hydrolases"/>
    <property type="match status" value="1"/>
</dbReference>
<dbReference type="SUPFAM" id="SSF50156">
    <property type="entry name" value="PDZ domain-like"/>
    <property type="match status" value="1"/>
</dbReference>
<dbReference type="SUPFAM" id="SSF50044">
    <property type="entry name" value="SH3-domain"/>
    <property type="match status" value="1"/>
</dbReference>
<dbReference type="PROSITE" id="PS00856">
    <property type="entry name" value="GUANYLATE_KINASE_1"/>
    <property type="match status" value="1"/>
</dbReference>
<dbReference type="PROSITE" id="PS50052">
    <property type="entry name" value="GUANYLATE_KINASE_2"/>
    <property type="match status" value="1"/>
</dbReference>
<dbReference type="PROSITE" id="PS51022">
    <property type="entry name" value="L27"/>
    <property type="match status" value="2"/>
</dbReference>
<dbReference type="PROSITE" id="PS50106">
    <property type="entry name" value="PDZ"/>
    <property type="match status" value="1"/>
</dbReference>
<dbReference type="PROSITE" id="PS50002">
    <property type="entry name" value="SH3"/>
    <property type="match status" value="1"/>
</dbReference>
<keyword id="KW-0067">ATP-binding</keyword>
<keyword id="KW-0965">Cell junction</keyword>
<keyword id="KW-1003">Cell membrane</keyword>
<keyword id="KW-0966">Cell projection</keyword>
<keyword id="KW-0333">Golgi apparatus</keyword>
<keyword id="KW-0472">Membrane</keyword>
<keyword id="KW-0547">Nucleotide-binding</keyword>
<keyword id="KW-0597">Phosphoprotein</keyword>
<keyword id="KW-1185">Reference proteome</keyword>
<keyword id="KW-0677">Repeat</keyword>
<keyword id="KW-0728">SH3 domain</keyword>
<keyword id="KW-0796">Tight junction</keyword>
<comment type="function">
    <text evidence="1 2 3 10">Plays a role in tight junction biogenesis and in the establishment of cell polarity in epithelial cells (PubMed:17182851). Also involved in adherens junction biogenesis by ensuring correct localization of the exocyst complex protein EXOC4/SEC8 which allows trafficking of adherens junction structural component CDH1 to the cell surface (PubMed:17182851). Plays a role through its interaction with CDH5 in vascular lumen formation and endothelial membrane polarity (By similarity). Required during embryonic and postnatal retinal development (By similarity). Required for the maintenance of cerebellar progenitor cells in an undifferentiated proliferative state, preventing premature differentiation, and is required for cerebellar histogenesis, fissure formation, cerebellar layer organization and cortical development (By similarity). Plays a role in neuronal progenitor cell survival, potentially via promotion of mTOR signaling (By similarity). Plays a role in the radial and longitudinal extension of the myelin sheath in Schwann cells (By similarity). May modulate SC6A1/GAT1-mediated GABA uptake by stabilizing the transporter (By similarity). May play a role in the T-cell receptor-mediated activation of NF-kappa-B (By similarity). Required for localization of EZR to the apical membrane of parietal cells and may play a role in the dynamic remodeling of the apical cytoskeleton (By similarity). Required for the normal polarized localization of the vesicular marker STX4 (By similarity). Required for the correct trafficking of the myelin proteins PMP22 and MAG (By similarity). Involved in promoting phosphorylation and cytoplasmic retention of transcriptional coactivators YAP1 and WWTR1/TAZ which leads to suppression of TGFB1-dependent transcription of target genes such as CCN2/CTGF, SERPINE1/PAI1, SNAI1/SNAIL1 and SMAD7 (By similarity).</text>
</comment>
<comment type="subunit">
    <text evidence="2 3 9">Heterodimer with MPP1 (By similarity). Forms a heterotrimeric complex composed of PALS1, LIN7B and PATJ; the N-terminal L27 domain of PALS1 interacts with the L27 domain of PATJ and the C-terminal L27 domain of PALS1 interacts with the L27 domain of LIN7B (By similarity). Component of a complex composed of PALS1, CRB1 and MPP4 (By similarity). Component of a complex whose core is composed of ARHGAP17, AMOT, PALS1, PATJ and PARD3/PAR3 (By similarity). Component of a complex composed of PALS1, CRB1 and EPB41L5 (By similarity). Within the complex, interacts (via HOOK domain) with EPB41L5 (via FERM domain), and interacts with CRB1 (via intracellular domain) (By similarity). Component of a complex composed of PALS1, MPP3 and CRB1; PALS1 acts as a bridging protein between MPP3 (via guanylate kinase-like domain) and CRB1 (By similarity). Component of a complex composed of CRB3, PALS1 and PATJ (PubMed:12527193). As part of the Crumbs complex; interacts with WWP1, the interaction is enhanced by AMOTL2 and facilitates WWP1 localization to the plasma membrane (By similarity). The Crumbs complex promotes monoubiquitination of AMOTL2 by WWP1, which activates the Hippo signaling pathway (By similarity). Interacts (via PDZ domain) with PATJ (via N-terminus) (By similarity). Interacts with EZR (By similarity). Interacts (via PDZ domain) with CRB1 (via C-terminal ERLI motif) (By similarity). While the PDZ domain is sufficient for interaction with CRB1, the adjacent SH3 and guanylate kinase-like domains are likely to contribute to a high affinity interaction (By similarity). Interacts with WWTR1/TAZ (via WW domain) (By similarity). Interacts with MPP7 (By similarity). Interacts (via PDZ domain) with CRB3 (via C-terminus) (PubMed:12527193). Interacts with LIN7C (By similarity). Interacts with MPDZ (By similarity). Interacts with PARD6B (By similarity). Interacts with SC6A1 (By similarity). Interacts with CDH5; the interaction promotes PALS1 localization to cell junctions and is required for CDH5-mediated vascular lumen formation and endothelial cell (By similarity). Interacts with NPHP1 (via coiled coil and SH3 domains) (By similarity). Interacts with NPHP4 (By similarity). Interacts with CRB2 (By similarity).</text>
</comment>
<comment type="subcellular location">
    <subcellularLocation>
        <location evidence="2">Golgi apparatus</location>
    </subcellularLocation>
    <subcellularLocation>
        <location evidence="3">Cell membrane</location>
        <topology evidence="3">Peripheral membrane protein</topology>
    </subcellularLocation>
    <subcellularLocation>
        <location evidence="3">Endomembrane system</location>
        <topology evidence="3">Peripheral membrane protein</topology>
    </subcellularLocation>
    <subcellularLocation>
        <location evidence="10">Cell junction</location>
        <location evidence="10">Tight junction</location>
    </subcellularLocation>
    <subcellularLocation>
        <location evidence="10">Cell junction</location>
        <location evidence="10">Adherens junction</location>
    </subcellularLocation>
    <subcellularLocation>
        <location evidence="3">Cell projection</location>
        <location evidence="3">Axon</location>
    </subcellularLocation>
    <subcellularLocation>
        <location evidence="3">Perikaryon</location>
    </subcellularLocation>
    <subcellularLocation>
        <location evidence="2">Apical cell membrane</location>
    </subcellularLocation>
    <text evidence="2 3">Localized to the tight junctions of epithelial cells (By similarity). Localized to the Golgi apparatus in T lymphocytes (By similarity). Localized to a subset of intracellular vesicles (By similarity). Localized to the Purkinje cell body and axon (By similarity). Localized to intercellular junctions in vascular endothelial cells (By similarity). Localized to Schmidt-Lanterman incisures, the adaxonal domain, and the inner part of paranodal loops in myelinating Schwann cells of the sciatic nerve (By similarity). Localized to apical membrane domains of the outer limiting membrane (OLM) junctions in the retina (By similarity). Colocalizes with CRB1 at the OLM, apical to the adherens junction (By similarity). Colocalizes with MPP1 in the retina at the OLM (By similarity). Colocalizes with MPP3 to the subapical region of adherens junctions in the retina OLM (By similarity).</text>
</comment>
<comment type="domain">
    <text evidence="3">The L27 domain 1 functions in targeting to the tight junctions by binding to and stabilizing PATJ.</text>
</comment>
<comment type="domain">
    <text evidence="3">The PDZ domain binds to the C-terminus of SC6A1.</text>
</comment>
<comment type="similarity">
    <text evidence="12">Belongs to the MAGUK family.</text>
</comment>
<accession>E2QY99</accession>
<sequence length="675" mass="77232">MTTSHMNGHVTEESDNEVKNVDLASPEEHQKHREMAVDCPGDLGTRMMPVRRSAQLERIRQQQEDMRRRREEEGKKQELDLNSSMRLKKLAQIPPKTGIDNPIFDTEEGIVLESPHYAVKILEVEDLFSSLKHIQHTLVDSQSQEDISLLLQLVQNKDFQNAFKIHNAVTVHMNKASPPFPLISNAQDLAQEVQTVLKPVHHKEGQELTALLSAPHVQALLLAHDKVAEQEMQLEPFTDERVYESIGQYGGETVKIVRIEKARDIPLGATVRNEMDSVIISRIVKGGAAEKSGLLHEGDEVLEINGIEIRGKDVNEVFDLLSDMHGTLTFVLIPSQQIKPPPAKETVIHVKAHFDYDPSDDPYVPCRELGLSFQKGDILHIISQEDPNWWQAYREGDEDNQPLAGLVPGKSFQQQREAMKQTIEEDKEPEKSGKLWCAKKNKKKRKKVLYNANKNDDYDNEEILTYEEMSLYHQPANRKRPIILIGPQNCGQNELRQRLMNKEKDRFASAVPHTTRSRRDHEVAGRDYHFVSRQAFEADIAAGKFIEHGEFEKNLYGTSIDSVRQVINSGKICLLSLRTQSLKTLRNSDLKPYIIFIAPPSQERLRALLAKEGKNPKPEELREIIEKTREMEQNNGHYFDTAIVNSDLDKAYQELLRLINKLDTEPQWVPSSWLR</sequence>
<proteinExistence type="evidence at protein level"/>
<feature type="chain" id="PRO_0000447573" description="Protein PALS1">
    <location>
        <begin position="1"/>
        <end position="675"/>
    </location>
</feature>
<feature type="domain" description="L27 1" evidence="7">
    <location>
        <begin position="120"/>
        <end position="177"/>
    </location>
</feature>
<feature type="domain" description="L27 2" evidence="7">
    <location>
        <begin position="179"/>
        <end position="235"/>
    </location>
</feature>
<feature type="domain" description="PDZ" evidence="5">
    <location>
        <begin position="256"/>
        <end position="336"/>
    </location>
</feature>
<feature type="domain" description="SH3" evidence="6">
    <location>
        <begin position="345"/>
        <end position="417"/>
    </location>
</feature>
<feature type="domain" description="Guanylate kinase-like" evidence="4">
    <location>
        <begin position="479"/>
        <end position="660"/>
    </location>
</feature>
<feature type="region of interest" description="Required for the correct localization of PALS1 and PATJ at cell-cell contacts and the normal formation of tight junctions and adherens junctions" evidence="3">
    <location>
        <begin position="1"/>
        <end position="345"/>
    </location>
</feature>
<feature type="region of interest" description="Disordered" evidence="8">
    <location>
        <begin position="1"/>
        <end position="78"/>
    </location>
</feature>
<feature type="region of interest" description="Interaction with PARD6B" evidence="3">
    <location>
        <begin position="21"/>
        <end position="140"/>
    </location>
</feature>
<feature type="region of interest" description="Interaction with LIN7C" evidence="3">
    <location>
        <begin position="181"/>
        <end position="243"/>
    </location>
</feature>
<feature type="compositionally biased region" description="Basic and acidic residues" evidence="8">
    <location>
        <begin position="10"/>
        <end position="36"/>
    </location>
</feature>
<feature type="compositionally biased region" description="Basic and acidic residues" evidence="8">
    <location>
        <begin position="54"/>
        <end position="78"/>
    </location>
</feature>
<feature type="binding site" evidence="4">
    <location>
        <begin position="486"/>
        <end position="493"/>
    </location>
    <ligand>
        <name>ATP</name>
        <dbReference type="ChEBI" id="CHEBI:30616"/>
    </ligand>
</feature>
<feature type="modified residue" description="Phosphoserine" evidence="2">
    <location>
        <position position="14"/>
    </location>
</feature>
<feature type="modified residue" description="Phosphoserine" evidence="3">
    <location>
        <position position="25"/>
    </location>
</feature>
<feature type="modified residue" description="Phosphoserine" evidence="2">
    <location>
        <position position="83"/>
    </location>
</feature>
<feature type="modified residue" description="Phosphoserine" evidence="2">
    <location>
        <position position="84"/>
    </location>
</feature>
<organism evidence="13">
    <name type="scientific">Canis lupus familiaris</name>
    <name type="common">Dog</name>
    <name type="synonym">Canis familiaris</name>
    <dbReference type="NCBI Taxonomy" id="9615"/>
    <lineage>
        <taxon>Eukaryota</taxon>
        <taxon>Metazoa</taxon>
        <taxon>Chordata</taxon>
        <taxon>Craniata</taxon>
        <taxon>Vertebrata</taxon>
        <taxon>Euteleostomi</taxon>
        <taxon>Mammalia</taxon>
        <taxon>Eutheria</taxon>
        <taxon>Laurasiatheria</taxon>
        <taxon>Carnivora</taxon>
        <taxon>Caniformia</taxon>
        <taxon>Canidae</taxon>
        <taxon>Canis</taxon>
    </lineage>
</organism>